<dbReference type="EMBL" id="AF155883">
    <property type="protein sequence ID" value="AAF19020.1"/>
    <property type="molecule type" value="mRNA"/>
</dbReference>
<dbReference type="EMBL" id="AF506002">
    <property type="protein sequence ID" value="AAM28633.1"/>
    <property type="molecule type" value="mRNA"/>
</dbReference>
<dbReference type="EMBL" id="AK141265">
    <property type="protein sequence ID" value="BAE24623.1"/>
    <property type="molecule type" value="mRNA"/>
</dbReference>
<dbReference type="EMBL" id="BC046596">
    <property type="protein sequence ID" value="AAH46596.1"/>
    <property type="molecule type" value="mRNA"/>
</dbReference>
<dbReference type="CCDS" id="CCDS28966.1"/>
<dbReference type="RefSeq" id="NP_065603.2">
    <property type="nucleotide sequence ID" value="NM_020578.3"/>
</dbReference>
<dbReference type="SMR" id="Q9QXY6"/>
<dbReference type="BioGRID" id="208297">
    <property type="interactions" value="9"/>
</dbReference>
<dbReference type="CORUM" id="Q9QXY6"/>
<dbReference type="FunCoup" id="Q9QXY6">
    <property type="interactions" value="2040"/>
</dbReference>
<dbReference type="IntAct" id="Q9QXY6">
    <property type="interactions" value="12"/>
</dbReference>
<dbReference type="MINT" id="Q9QXY6"/>
<dbReference type="STRING" id="10090.ENSMUSP00000024860"/>
<dbReference type="GlyGen" id="Q9QXY6">
    <property type="glycosylation" value="1 site, 1 O-linked glycan (1 site)"/>
</dbReference>
<dbReference type="iPTMnet" id="Q9QXY6"/>
<dbReference type="PhosphoSitePlus" id="Q9QXY6"/>
<dbReference type="SwissPalm" id="Q9QXY6"/>
<dbReference type="jPOST" id="Q9QXY6"/>
<dbReference type="PaxDb" id="10090-ENSMUSP00000024860"/>
<dbReference type="PeptideAtlas" id="Q9QXY6"/>
<dbReference type="ProteomicsDB" id="277695"/>
<dbReference type="Pumba" id="Q9QXY6"/>
<dbReference type="Antibodypedia" id="29084">
    <property type="antibodies" value="153 antibodies from 30 providers"/>
</dbReference>
<dbReference type="DNASU" id="57440"/>
<dbReference type="Ensembl" id="ENSMUST00000024860.9">
    <property type="protein sequence ID" value="ENSMUSP00000024860.8"/>
    <property type="gene ID" value="ENSMUSG00000024065.9"/>
</dbReference>
<dbReference type="GeneID" id="57440"/>
<dbReference type="KEGG" id="mmu:57440"/>
<dbReference type="UCSC" id="uc008dnn.2">
    <property type="organism name" value="mouse"/>
</dbReference>
<dbReference type="AGR" id="MGI:1928900"/>
<dbReference type="CTD" id="30845"/>
<dbReference type="MGI" id="MGI:1928900">
    <property type="gene designation" value="Ehd3"/>
</dbReference>
<dbReference type="VEuPathDB" id="HostDB:ENSMUSG00000024065"/>
<dbReference type="eggNOG" id="KOG1954">
    <property type="taxonomic scope" value="Eukaryota"/>
</dbReference>
<dbReference type="GeneTree" id="ENSGT00940000159274"/>
<dbReference type="HOGENOM" id="CLU_017595_1_1_1"/>
<dbReference type="InParanoid" id="Q9QXY6"/>
<dbReference type="OMA" id="LMIGQYS"/>
<dbReference type="OrthoDB" id="1716625at2759"/>
<dbReference type="PhylomeDB" id="Q9QXY6"/>
<dbReference type="TreeFam" id="TF314429"/>
<dbReference type="Reactome" id="R-MMU-983231">
    <property type="pathway name" value="Factors involved in megakaryocyte development and platelet production"/>
</dbReference>
<dbReference type="BioGRID-ORCS" id="57440">
    <property type="hits" value="1 hit in 78 CRISPR screens"/>
</dbReference>
<dbReference type="CD-CODE" id="CE726F99">
    <property type="entry name" value="Postsynaptic density"/>
</dbReference>
<dbReference type="ChiTaRS" id="Ehd3">
    <property type="organism name" value="mouse"/>
</dbReference>
<dbReference type="PRO" id="PR:Q9QXY6"/>
<dbReference type="Proteomes" id="UP000000589">
    <property type="component" value="Chromosome 17"/>
</dbReference>
<dbReference type="RNAct" id="Q9QXY6">
    <property type="molecule type" value="protein"/>
</dbReference>
<dbReference type="Bgee" id="ENSMUSG00000024065">
    <property type="expression patterns" value="Expressed in gastrula and 210 other cell types or tissues"/>
</dbReference>
<dbReference type="GO" id="GO:0020018">
    <property type="term" value="C:ciliary pocket membrane"/>
    <property type="evidence" value="ECO:0000250"/>
    <property type="project" value="UniProtKB"/>
</dbReference>
<dbReference type="GO" id="GO:0005737">
    <property type="term" value="C:cytoplasm"/>
    <property type="evidence" value="ECO:0000314"/>
    <property type="project" value="UniProtKB"/>
</dbReference>
<dbReference type="GO" id="GO:0005829">
    <property type="term" value="C:cytosol"/>
    <property type="evidence" value="ECO:0007669"/>
    <property type="project" value="GOC"/>
</dbReference>
<dbReference type="GO" id="GO:0030139">
    <property type="term" value="C:endocytic vesicle"/>
    <property type="evidence" value="ECO:0000314"/>
    <property type="project" value="MGI"/>
</dbReference>
<dbReference type="GO" id="GO:0043209">
    <property type="term" value="C:myelin sheath"/>
    <property type="evidence" value="ECO:0007005"/>
    <property type="project" value="UniProtKB"/>
</dbReference>
<dbReference type="GO" id="GO:0048471">
    <property type="term" value="C:perinuclear region of cytoplasm"/>
    <property type="evidence" value="ECO:0000314"/>
    <property type="project" value="MGI"/>
</dbReference>
<dbReference type="GO" id="GO:0055038">
    <property type="term" value="C:recycling endosome membrane"/>
    <property type="evidence" value="ECO:0000250"/>
    <property type="project" value="UniProtKB"/>
</dbReference>
<dbReference type="GO" id="GO:0005524">
    <property type="term" value="F:ATP binding"/>
    <property type="evidence" value="ECO:0007669"/>
    <property type="project" value="UniProtKB-KW"/>
</dbReference>
<dbReference type="GO" id="GO:0005509">
    <property type="term" value="F:calcium ion binding"/>
    <property type="evidence" value="ECO:0007669"/>
    <property type="project" value="InterPro"/>
</dbReference>
<dbReference type="GO" id="GO:0005525">
    <property type="term" value="F:GTP binding"/>
    <property type="evidence" value="ECO:0007669"/>
    <property type="project" value="InterPro"/>
</dbReference>
<dbReference type="GO" id="GO:0008289">
    <property type="term" value="F:lipid binding"/>
    <property type="evidence" value="ECO:0007669"/>
    <property type="project" value="UniProtKB-KW"/>
</dbReference>
<dbReference type="GO" id="GO:0060271">
    <property type="term" value="P:cilium assembly"/>
    <property type="evidence" value="ECO:0000315"/>
    <property type="project" value="UniProtKB"/>
</dbReference>
<dbReference type="GO" id="GO:0034498">
    <property type="term" value="P:early endosome to Golgi transport"/>
    <property type="evidence" value="ECO:0007669"/>
    <property type="project" value="Ensembl"/>
</dbReference>
<dbReference type="GO" id="GO:0032456">
    <property type="term" value="P:endocytic recycling"/>
    <property type="evidence" value="ECO:0000250"/>
    <property type="project" value="UniProtKB"/>
</dbReference>
<dbReference type="GO" id="GO:0090160">
    <property type="term" value="P:Golgi to lysosome transport"/>
    <property type="evidence" value="ECO:0007669"/>
    <property type="project" value="Ensembl"/>
</dbReference>
<dbReference type="GO" id="GO:1901387">
    <property type="term" value="P:positive regulation of voltage-gated calcium channel activity"/>
    <property type="evidence" value="ECO:0000315"/>
    <property type="project" value="UniProtKB"/>
</dbReference>
<dbReference type="GO" id="GO:0051260">
    <property type="term" value="P:protein homooligomerization"/>
    <property type="evidence" value="ECO:0000250"/>
    <property type="project" value="UniProtKB"/>
</dbReference>
<dbReference type="GO" id="GO:0072659">
    <property type="term" value="P:protein localization to plasma membrane"/>
    <property type="evidence" value="ECO:0000315"/>
    <property type="project" value="MGI"/>
</dbReference>
<dbReference type="GO" id="GO:0015031">
    <property type="term" value="P:protein transport"/>
    <property type="evidence" value="ECO:0007669"/>
    <property type="project" value="UniProtKB-KW"/>
</dbReference>
<dbReference type="GO" id="GO:0001881">
    <property type="term" value="P:receptor recycling"/>
    <property type="evidence" value="ECO:0007669"/>
    <property type="project" value="Ensembl"/>
</dbReference>
<dbReference type="GO" id="GO:1903779">
    <property type="term" value="P:regulation of cardiac conduction"/>
    <property type="evidence" value="ECO:0000315"/>
    <property type="project" value="UniProtKB"/>
</dbReference>
<dbReference type="GO" id="GO:0086036">
    <property type="term" value="P:regulation of cardiac muscle cell membrane potential"/>
    <property type="evidence" value="ECO:0000315"/>
    <property type="project" value="MGI"/>
</dbReference>
<dbReference type="GO" id="GO:0055117">
    <property type="term" value="P:regulation of cardiac muscle contraction"/>
    <property type="evidence" value="ECO:0000315"/>
    <property type="project" value="UniProtKB"/>
</dbReference>
<dbReference type="GO" id="GO:1903358">
    <property type="term" value="P:regulation of Golgi organization"/>
    <property type="evidence" value="ECO:0007669"/>
    <property type="project" value="Ensembl"/>
</dbReference>
<dbReference type="CDD" id="cd00052">
    <property type="entry name" value="EH"/>
    <property type="match status" value="1"/>
</dbReference>
<dbReference type="CDD" id="cd09913">
    <property type="entry name" value="EHD"/>
    <property type="match status" value="1"/>
</dbReference>
<dbReference type="FunFam" id="3.40.50.300:FF:000147">
    <property type="entry name" value="EH domain-containing protein 1"/>
    <property type="match status" value="1"/>
</dbReference>
<dbReference type="FunFam" id="1.10.238.10:FF:000038">
    <property type="entry name" value="EH domain-containing protein 3"/>
    <property type="match status" value="1"/>
</dbReference>
<dbReference type="Gene3D" id="1.10.268.20">
    <property type="match status" value="1"/>
</dbReference>
<dbReference type="Gene3D" id="1.10.238.10">
    <property type="entry name" value="EF-hand"/>
    <property type="match status" value="1"/>
</dbReference>
<dbReference type="Gene3D" id="3.40.50.300">
    <property type="entry name" value="P-loop containing nucleotide triphosphate hydrolases"/>
    <property type="match status" value="1"/>
</dbReference>
<dbReference type="InterPro" id="IPR040990">
    <property type="entry name" value="DUF5600"/>
</dbReference>
<dbReference type="InterPro" id="IPR045063">
    <property type="entry name" value="Dynamin_N"/>
</dbReference>
<dbReference type="InterPro" id="IPR011992">
    <property type="entry name" value="EF-hand-dom_pair"/>
</dbReference>
<dbReference type="InterPro" id="IPR018247">
    <property type="entry name" value="EF_Hand_1_Ca_BS"/>
</dbReference>
<dbReference type="InterPro" id="IPR002048">
    <property type="entry name" value="EF_hand_dom"/>
</dbReference>
<dbReference type="InterPro" id="IPR000261">
    <property type="entry name" value="EH_dom"/>
</dbReference>
<dbReference type="InterPro" id="IPR031692">
    <property type="entry name" value="EHD_N"/>
</dbReference>
<dbReference type="InterPro" id="IPR030381">
    <property type="entry name" value="G_DYNAMIN_dom"/>
</dbReference>
<dbReference type="InterPro" id="IPR027417">
    <property type="entry name" value="P-loop_NTPase"/>
</dbReference>
<dbReference type="PANTHER" id="PTHR11216:SF170">
    <property type="entry name" value="DYNAMIN ASSOCIATED PROTEIN 160, ISOFORM D"/>
    <property type="match status" value="1"/>
</dbReference>
<dbReference type="PANTHER" id="PTHR11216">
    <property type="entry name" value="EH DOMAIN"/>
    <property type="match status" value="1"/>
</dbReference>
<dbReference type="Pfam" id="PF18150">
    <property type="entry name" value="DUF5600"/>
    <property type="match status" value="1"/>
</dbReference>
<dbReference type="Pfam" id="PF00350">
    <property type="entry name" value="Dynamin_N"/>
    <property type="match status" value="1"/>
</dbReference>
<dbReference type="Pfam" id="PF12763">
    <property type="entry name" value="EH"/>
    <property type="match status" value="1"/>
</dbReference>
<dbReference type="Pfam" id="PF16880">
    <property type="entry name" value="EHD_N"/>
    <property type="match status" value="1"/>
</dbReference>
<dbReference type="SMART" id="SM00027">
    <property type="entry name" value="EH"/>
    <property type="match status" value="1"/>
</dbReference>
<dbReference type="SUPFAM" id="SSF47473">
    <property type="entry name" value="EF-hand"/>
    <property type="match status" value="1"/>
</dbReference>
<dbReference type="SUPFAM" id="SSF52540">
    <property type="entry name" value="P-loop containing nucleoside triphosphate hydrolases"/>
    <property type="match status" value="1"/>
</dbReference>
<dbReference type="PROSITE" id="PS00018">
    <property type="entry name" value="EF_HAND_1"/>
    <property type="match status" value="1"/>
</dbReference>
<dbReference type="PROSITE" id="PS50222">
    <property type="entry name" value="EF_HAND_2"/>
    <property type="match status" value="1"/>
</dbReference>
<dbReference type="PROSITE" id="PS50031">
    <property type="entry name" value="EH"/>
    <property type="match status" value="1"/>
</dbReference>
<dbReference type="PROSITE" id="PS51718">
    <property type="entry name" value="G_DYNAMIN_2"/>
    <property type="match status" value="1"/>
</dbReference>
<accession>Q9QXY6</accession>
<accession>Q8K590</accession>
<proteinExistence type="evidence at protein level"/>
<protein>
    <recommendedName>
        <fullName evidence="21">EH domain-containing protein 3</fullName>
    </recommendedName>
</protein>
<comment type="function">
    <text evidence="3 13 14 16 17 18 19 20">ATP- and membrane-binding protein that controls membrane reorganization/tubulation upon ATP hydrolysis. In vitro causes tubulation of endocytic membranes (By similarity). Binding to phosphatidic acid induces its membrane tubulation activity (PubMed:26896729). Plays a role in endocytic transport. Involved in early endosome to recycling endosome compartment (ERC), retrograde early endosome to Golgi, and endosome to plasma membrane (rapid recycling) protein transport. Involved in the regulation of Golgi maintenance and morphology (By similarity). Involved in the recycling of internalized D1 dopamine receptor (By similarity). Plays a role in cardiac protein trafficking probably implicating ANK2. Involved in the ventricular membrane targeting of SLC8A1 and CACNA1C and probably the atrial membrane localization of CACNA1GG and CACNA1H implicated in the regulation of atrial myocyte excitability and cardiac conduction (PubMed:20489164, PubMed:24759929, PubMed:25825486). In conjunction with EHD4 may be involved in endocytic trafficking of KDR/VEGFR2 implicated in control of glomerular function (PubMed:21408024). Involved in the rapid recycling of integrin beta-3 implicated in cell adhesion maintenance (By similarity). Involved in the unidirectional retrograde dendritic transport of endocytosed BACE1 and in efficient sorting of BACE1 to axons implicating a function in neuronal APP processing. Plays a role in the formation of the ciliary vesicle, an early step in cilium biogenesis; possibly sharing redundant functions with Ehd1 (PubMed:25686250).</text>
</comment>
<comment type="subunit">
    <text evidence="3 9 10 19">Homooligomer. Heterooligomer with EHD1 (PubMed:12121420). Heterooligomer with EHD2 and EHD4; ATP-binding is required for heterooligomerization (By similarity). Interacts with PACSIN1 (PubMed:15930129). Interacts with PACSIN2 (PubMed:15930129). Interacts (via EH domain) with MICALL1 (By similarity). Interacts (via EH domain) with RAB11FIP2 (By similarity). Interacts with ANK2 (By similarity). Interacts with CACNA1GG and CACNA1H (PubMed:25825486).</text>
</comment>
<comment type="interaction">
    <interactant intactId="EBI-775304">
        <id>Q9QXY6</id>
    </interactant>
    <interactant intactId="EBI-490691">
        <id>Q9H4M9</id>
        <label>EHD1</label>
    </interactant>
    <organismsDiffer>true</organismsDiffer>
    <experiments>7</experiments>
</comment>
<comment type="interaction">
    <interactant intactId="EBI-775304">
        <id>Q9QXY6</id>
    </interactant>
    <interactant intactId="EBI-2870749">
        <id>Q9NZN3</id>
        <label>EHD3</label>
    </interactant>
    <organismsDiffer>true</organismsDiffer>
    <experiments>5</experiments>
</comment>
<comment type="subcellular location">
    <subcellularLocation>
        <location evidence="3 22">Recycling endosome membrane</location>
        <topology evidence="21">Peripheral membrane protein</topology>
        <orientation evidence="21">Cytoplasmic side</orientation>
    </subcellularLocation>
    <subcellularLocation>
        <location evidence="3">Cell membrane</location>
        <topology evidence="21">Peripheral membrane protein</topology>
        <orientation evidence="21">Cytoplasmic side</orientation>
    </subcellularLocation>
    <subcellularLocation>
        <location evidence="3">Cell projection</location>
        <location evidence="3">Cilium membrane</location>
        <topology evidence="21">Peripheral membrane protein</topology>
        <orientation evidence="21">Cytoplasmic side</orientation>
    </subcellularLocation>
    <subcellularLocation>
        <location evidence="9 16">Cytoplasmic vesicle</location>
    </subcellularLocation>
    <text evidence="3 12 16 19">Localizes to the ciliary pocket from where the cilium protrudes (By similarity). Colocalizes with RAB8A and MYO5B to a cytoplasmic tubular network devoid of RAB11A (PubMed:17507647). Colocalizes with ANK2 in myocyte perinuclear region (PubMed:25825486). Colocalizes with BACE1 in tubulovesicular cytoplasmic membranes. Colocalizes with BACE1 and APP amyloid beta proteins in hippocampal mossy fiber terminals (PubMed:24373286).</text>
</comment>
<comment type="tissue specificity">
    <text evidence="11 14 15">Strong expression seen in the kidney, brain and liver. In the kidney, expressed exclusively by glomerular endothelial cells; at protein level. Expressed in skeletal muscle neuromuscular junction perisynaptic region; at protein level.</text>
</comment>
<comment type="domain">
    <text evidence="4">The EH domain interacts with Asn-Pro-Phe (NPF) motifs of target proteins.</text>
</comment>
<comment type="similarity">
    <text evidence="8">Belongs to the TRAFAC class dynamin-like GTPase superfamily. Dynamin/Fzo/YdjA family. EHD subfamily.</text>
</comment>
<organism>
    <name type="scientific">Mus musculus</name>
    <name type="common">Mouse</name>
    <dbReference type="NCBI Taxonomy" id="10090"/>
    <lineage>
        <taxon>Eukaryota</taxon>
        <taxon>Metazoa</taxon>
        <taxon>Chordata</taxon>
        <taxon>Craniata</taxon>
        <taxon>Vertebrata</taxon>
        <taxon>Euteleostomi</taxon>
        <taxon>Mammalia</taxon>
        <taxon>Eutheria</taxon>
        <taxon>Euarchontoglires</taxon>
        <taxon>Glires</taxon>
        <taxon>Rodentia</taxon>
        <taxon>Myomorpha</taxon>
        <taxon>Muroidea</taxon>
        <taxon>Muridae</taxon>
        <taxon>Murinae</taxon>
        <taxon>Mus</taxon>
        <taxon>Mus</taxon>
    </lineage>
</organism>
<name>EHD3_MOUSE</name>
<reference key="1">
    <citation type="journal article" date="2002" name="Traffic">
        <title>EHD3: a protein that resides in recycling tubular and vesicular membrane structures and interacts with EHD1.</title>
        <authorList>
            <person name="Galperin E."/>
            <person name="Benjamin S."/>
            <person name="Rapaport D."/>
            <person name="Rotem-Yehudar R."/>
            <person name="Tolchinsky S."/>
            <person name="Horowitz M."/>
        </authorList>
    </citation>
    <scope>NUCLEOTIDE SEQUENCE [MRNA]</scope>
    <scope>SUBCELLULAR LOCATION</scope>
    <scope>INTERACTION WITH EHD1</scope>
</reference>
<reference key="2">
    <citation type="submission" date="2002-04" db="EMBL/GenBank/DDBJ databases">
        <authorList>
            <person name="Park S.Y."/>
            <person name="Lee W."/>
        </authorList>
    </citation>
    <scope>NUCLEOTIDE SEQUENCE [MRNA]</scope>
</reference>
<reference key="3">
    <citation type="journal article" date="2005" name="Science">
        <title>The transcriptional landscape of the mammalian genome.</title>
        <authorList>
            <person name="Carninci P."/>
            <person name="Kasukawa T."/>
            <person name="Katayama S."/>
            <person name="Gough J."/>
            <person name="Frith M.C."/>
            <person name="Maeda N."/>
            <person name="Oyama R."/>
            <person name="Ravasi T."/>
            <person name="Lenhard B."/>
            <person name="Wells C."/>
            <person name="Kodzius R."/>
            <person name="Shimokawa K."/>
            <person name="Bajic V.B."/>
            <person name="Brenner S.E."/>
            <person name="Batalov S."/>
            <person name="Forrest A.R."/>
            <person name="Zavolan M."/>
            <person name="Davis M.J."/>
            <person name="Wilming L.G."/>
            <person name="Aidinis V."/>
            <person name="Allen J.E."/>
            <person name="Ambesi-Impiombato A."/>
            <person name="Apweiler R."/>
            <person name="Aturaliya R.N."/>
            <person name="Bailey T.L."/>
            <person name="Bansal M."/>
            <person name="Baxter L."/>
            <person name="Beisel K.W."/>
            <person name="Bersano T."/>
            <person name="Bono H."/>
            <person name="Chalk A.M."/>
            <person name="Chiu K.P."/>
            <person name="Choudhary V."/>
            <person name="Christoffels A."/>
            <person name="Clutterbuck D.R."/>
            <person name="Crowe M.L."/>
            <person name="Dalla E."/>
            <person name="Dalrymple B.P."/>
            <person name="de Bono B."/>
            <person name="Della Gatta G."/>
            <person name="di Bernardo D."/>
            <person name="Down T."/>
            <person name="Engstrom P."/>
            <person name="Fagiolini M."/>
            <person name="Faulkner G."/>
            <person name="Fletcher C.F."/>
            <person name="Fukushima T."/>
            <person name="Furuno M."/>
            <person name="Futaki S."/>
            <person name="Gariboldi M."/>
            <person name="Georgii-Hemming P."/>
            <person name="Gingeras T.R."/>
            <person name="Gojobori T."/>
            <person name="Green R.E."/>
            <person name="Gustincich S."/>
            <person name="Harbers M."/>
            <person name="Hayashi Y."/>
            <person name="Hensch T.K."/>
            <person name="Hirokawa N."/>
            <person name="Hill D."/>
            <person name="Huminiecki L."/>
            <person name="Iacono M."/>
            <person name="Ikeo K."/>
            <person name="Iwama A."/>
            <person name="Ishikawa T."/>
            <person name="Jakt M."/>
            <person name="Kanapin A."/>
            <person name="Katoh M."/>
            <person name="Kawasawa Y."/>
            <person name="Kelso J."/>
            <person name="Kitamura H."/>
            <person name="Kitano H."/>
            <person name="Kollias G."/>
            <person name="Krishnan S.P."/>
            <person name="Kruger A."/>
            <person name="Kummerfeld S.K."/>
            <person name="Kurochkin I.V."/>
            <person name="Lareau L.F."/>
            <person name="Lazarevic D."/>
            <person name="Lipovich L."/>
            <person name="Liu J."/>
            <person name="Liuni S."/>
            <person name="McWilliam S."/>
            <person name="Madan Babu M."/>
            <person name="Madera M."/>
            <person name="Marchionni L."/>
            <person name="Matsuda H."/>
            <person name="Matsuzawa S."/>
            <person name="Miki H."/>
            <person name="Mignone F."/>
            <person name="Miyake S."/>
            <person name="Morris K."/>
            <person name="Mottagui-Tabar S."/>
            <person name="Mulder N."/>
            <person name="Nakano N."/>
            <person name="Nakauchi H."/>
            <person name="Ng P."/>
            <person name="Nilsson R."/>
            <person name="Nishiguchi S."/>
            <person name="Nishikawa S."/>
            <person name="Nori F."/>
            <person name="Ohara O."/>
            <person name="Okazaki Y."/>
            <person name="Orlando V."/>
            <person name="Pang K.C."/>
            <person name="Pavan W.J."/>
            <person name="Pavesi G."/>
            <person name="Pesole G."/>
            <person name="Petrovsky N."/>
            <person name="Piazza S."/>
            <person name="Reed J."/>
            <person name="Reid J.F."/>
            <person name="Ring B.Z."/>
            <person name="Ringwald M."/>
            <person name="Rost B."/>
            <person name="Ruan Y."/>
            <person name="Salzberg S.L."/>
            <person name="Sandelin A."/>
            <person name="Schneider C."/>
            <person name="Schoenbach C."/>
            <person name="Sekiguchi K."/>
            <person name="Semple C.A."/>
            <person name="Seno S."/>
            <person name="Sessa L."/>
            <person name="Sheng Y."/>
            <person name="Shibata Y."/>
            <person name="Shimada H."/>
            <person name="Shimada K."/>
            <person name="Silva D."/>
            <person name="Sinclair B."/>
            <person name="Sperling S."/>
            <person name="Stupka E."/>
            <person name="Sugiura K."/>
            <person name="Sultana R."/>
            <person name="Takenaka Y."/>
            <person name="Taki K."/>
            <person name="Tammoja K."/>
            <person name="Tan S.L."/>
            <person name="Tang S."/>
            <person name="Taylor M.S."/>
            <person name="Tegner J."/>
            <person name="Teichmann S.A."/>
            <person name="Ueda H.R."/>
            <person name="van Nimwegen E."/>
            <person name="Verardo R."/>
            <person name="Wei C.L."/>
            <person name="Yagi K."/>
            <person name="Yamanishi H."/>
            <person name="Zabarovsky E."/>
            <person name="Zhu S."/>
            <person name="Zimmer A."/>
            <person name="Hide W."/>
            <person name="Bult C."/>
            <person name="Grimmond S.M."/>
            <person name="Teasdale R.D."/>
            <person name="Liu E.T."/>
            <person name="Brusic V."/>
            <person name="Quackenbush J."/>
            <person name="Wahlestedt C."/>
            <person name="Mattick J.S."/>
            <person name="Hume D.A."/>
            <person name="Kai C."/>
            <person name="Sasaki D."/>
            <person name="Tomaru Y."/>
            <person name="Fukuda S."/>
            <person name="Kanamori-Katayama M."/>
            <person name="Suzuki M."/>
            <person name="Aoki J."/>
            <person name="Arakawa T."/>
            <person name="Iida J."/>
            <person name="Imamura K."/>
            <person name="Itoh M."/>
            <person name="Kato T."/>
            <person name="Kawaji H."/>
            <person name="Kawagashira N."/>
            <person name="Kawashima T."/>
            <person name="Kojima M."/>
            <person name="Kondo S."/>
            <person name="Konno H."/>
            <person name="Nakano K."/>
            <person name="Ninomiya N."/>
            <person name="Nishio T."/>
            <person name="Okada M."/>
            <person name="Plessy C."/>
            <person name="Shibata K."/>
            <person name="Shiraki T."/>
            <person name="Suzuki S."/>
            <person name="Tagami M."/>
            <person name="Waki K."/>
            <person name="Watahiki A."/>
            <person name="Okamura-Oho Y."/>
            <person name="Suzuki H."/>
            <person name="Kawai J."/>
            <person name="Hayashizaki Y."/>
        </authorList>
    </citation>
    <scope>NUCLEOTIDE SEQUENCE [LARGE SCALE MRNA]</scope>
    <source>
        <strain>C57BL/6J</strain>
    </source>
</reference>
<reference key="4">
    <citation type="journal article" date="2004" name="Genome Res.">
        <title>The status, quality, and expansion of the NIH full-length cDNA project: the Mammalian Gene Collection (MGC).</title>
        <authorList>
            <consortium name="The MGC Project Team"/>
        </authorList>
    </citation>
    <scope>NUCLEOTIDE SEQUENCE [LARGE SCALE MRNA]</scope>
    <source>
        <tissue>Olfactory epithelium</tissue>
    </source>
</reference>
<reference key="5">
    <citation type="submission" date="2007-04" db="UniProtKB">
        <authorList>
            <person name="Lubec G."/>
            <person name="Kang S.U."/>
        </authorList>
    </citation>
    <scope>PROTEIN SEQUENCE OF 33-41; 125-162; 252-268; 270-280 AND 359-370</scope>
    <scope>IDENTIFICATION BY MASS SPECTROMETRY</scope>
    <source>
        <strain>C57BL/6J</strain>
        <tissue>Brain</tissue>
    </source>
</reference>
<reference key="6">
    <citation type="journal article" date="2005" name="Mol. Biol. Cell">
        <title>EHD proteins associate with syndapin I and II and such interactions play a crucial role in endosomal recycling.</title>
        <authorList>
            <person name="Braun A."/>
            <person name="Pinyol R."/>
            <person name="Dahlhaus R."/>
            <person name="Koch D."/>
            <person name="Fonarev P."/>
            <person name="Grant B.D."/>
            <person name="Kessels M.M."/>
            <person name="Qualmann B."/>
        </authorList>
    </citation>
    <scope>INTERACTION WITH PACSIN1 AND PACSIN2</scope>
</reference>
<reference key="7">
    <citation type="journal article" date="2007" name="Mol. Biol. Cell">
        <title>Myosin Vb interacts with Rab8a on a tubular network containing EHD1 and EHD3.</title>
        <authorList>
            <person name="Roland J.T."/>
            <person name="Kenworthy A.K."/>
            <person name="Peranen J."/>
            <person name="Caplan S."/>
            <person name="Goldenring J.R."/>
        </authorList>
    </citation>
    <scope>SUBCELLULAR LOCATION</scope>
</reference>
<reference key="8">
    <citation type="journal article" date="2007" name="J. Am. Soc. Nephrol.">
        <title>Expression and subcellular distribution of novel glomerulus-associated proteins Dendrin, Ehd3, Sh2d4a, Plekhh2, and 2310066E14Rik.</title>
        <authorList>
            <person name="Patrakka J."/>
            <person name="Xiao Z."/>
            <person name="Nukui M."/>
            <person name="Takemoto M."/>
            <person name="He L."/>
            <person name="Oddsson A."/>
            <person name="Perisic L."/>
            <person name="Kaukinen A."/>
            <person name="Szigyarto C.A.-K."/>
            <person name="Uhlen M."/>
            <person name="Jalanko H."/>
            <person name="Betsholtz C."/>
            <person name="Tryggvason K."/>
        </authorList>
    </citation>
    <scope>TISSUE SPECIFICITY</scope>
</reference>
<reference key="9">
    <citation type="journal article" date="2010" name="Cell">
        <title>A tissue-specific atlas of mouse protein phosphorylation and expression.</title>
        <authorList>
            <person name="Huttlin E.L."/>
            <person name="Jedrychowski M.P."/>
            <person name="Elias J.E."/>
            <person name="Goswami T."/>
            <person name="Rad R."/>
            <person name="Beausoleil S.A."/>
            <person name="Villen J."/>
            <person name="Haas W."/>
            <person name="Sowa M.E."/>
            <person name="Gygi S.P."/>
        </authorList>
    </citation>
    <scope>PHOSPHORYLATION [LARGE SCALE ANALYSIS] AT SER-456</scope>
    <scope>IDENTIFICATION BY MASS SPECTROMETRY [LARGE SCALE ANALYSIS]</scope>
    <source>
        <tissue>Brain</tissue>
        <tissue>Brown adipose tissue</tissue>
        <tissue>Kidney</tissue>
        <tissue>Liver</tissue>
        <tissue>Lung</tissue>
        <tissue>Spleen</tissue>
        <tissue>Testis</tissue>
    </source>
</reference>
<reference key="10">
    <citation type="journal article" date="2010" name="Circ. Res.">
        <title>EH domain proteins regulate cardiac membrane protein targeting.</title>
        <authorList>
            <person name="Gudmundsson H."/>
            <person name="Hund T.J."/>
            <person name="Wright P.J."/>
            <person name="Kline C.F."/>
            <person name="Snyder J.S."/>
            <person name="Qian L."/>
            <person name="Koval O.M."/>
            <person name="Cunha S.R."/>
            <person name="George M."/>
            <person name="Rainey M.A."/>
            <person name="Kashef F.E."/>
            <person name="Dun W."/>
            <person name="Boyden P.A."/>
            <person name="Anderson M.E."/>
            <person name="Band H."/>
            <person name="Mohler P.J."/>
        </authorList>
    </citation>
    <scope>FUNCTION</scope>
</reference>
<reference key="11">
    <citation type="journal article" date="2011" name="PLoS ONE">
        <title>Renal thrombotic microangiopathy in mice with combined deletion of endocytic recycling regulators EHD3 and EHD4.</title>
        <authorList>
            <person name="George M."/>
            <person name="Rainey M.A."/>
            <person name="Naramura M."/>
            <person name="Foster K.W."/>
            <person name="Holzapfel M.S."/>
            <person name="Willoughby L.L."/>
            <person name="Ying G."/>
            <person name="Goswami R.M."/>
            <person name="Gurumurthy C.B."/>
            <person name="Band V."/>
            <person name="Satchell S.C."/>
            <person name="Band H."/>
        </authorList>
    </citation>
    <scope>FUNCTION</scope>
    <scope>TISSUE SPECIFICITY</scope>
</reference>
<reference key="12">
    <citation type="journal article" date="2012" name="Skelet. Muscle">
        <title>Eps homology domain endosomal transport proteins differentially localize to the neuromuscular junction.</title>
        <authorList>
            <person name="Mate S.E."/>
            <person name="Van Der Meulen J.H."/>
            <person name="Arya P."/>
            <person name="Bhattacharyya S."/>
            <person name="Band H."/>
            <person name="Hoffman E.P."/>
        </authorList>
    </citation>
    <scope>TISSUE SPECIFICITY</scope>
</reference>
<reference key="13">
    <citation type="journal article" date="2013" name="Cell Rep.">
        <title>A function for EHD family proteins in unidirectional retrograde dendritic transport of BACE1 and Alzheimer's disease Abeta production.</title>
        <authorList>
            <person name="Buggia-Prevot V."/>
            <person name="Fernandez C.G."/>
            <person name="Udayar V."/>
            <person name="Vetrivel K.S."/>
            <person name="Elie A."/>
            <person name="Roseman J."/>
            <person name="Sasse V.A."/>
            <person name="Lefkow M."/>
            <person name="Meckler X."/>
            <person name="Bhattacharyya S."/>
            <person name="George M."/>
            <person name="Kar S."/>
            <person name="Bindokas V.P."/>
            <person name="Parent A.T."/>
            <person name="Rajendran L."/>
            <person name="Band H."/>
            <person name="Vassar R."/>
            <person name="Thinakaran G."/>
        </authorList>
    </citation>
    <scope>FUNCTION</scope>
    <scope>SUBCELLULAR LOCATION</scope>
</reference>
<reference key="14">
    <citation type="journal article" date="2014" name="Circ. Res.">
        <title>EHD3-dependent endosome pathway regulates cardiac membrane excitability and physiology.</title>
        <authorList>
            <person name="Curran J."/>
            <person name="Makara M.A."/>
            <person name="Little S.C."/>
            <person name="Musa H."/>
            <person name="Liu B."/>
            <person name="Wu X."/>
            <person name="Polina I."/>
            <person name="Alecusan J.S."/>
            <person name="Wright P."/>
            <person name="Li J."/>
            <person name="Billman G.E."/>
            <person name="Boyden P.A."/>
            <person name="Gyorke S."/>
            <person name="Band H."/>
            <person name="Hund T.J."/>
            <person name="Mohler P.J."/>
        </authorList>
    </citation>
    <scope>FUNCTION</scope>
</reference>
<reference key="15">
    <citation type="journal article" date="2015" name="J. Biol. Chem.">
        <title>Eps15 homology domain-containing protein 3 regulates cardiac T-type Ca2+ channel targeting and function in the atria.</title>
        <authorList>
            <person name="Curran J."/>
            <person name="Musa H."/>
            <person name="Kline C.F."/>
            <person name="Makara M.A."/>
            <person name="Little S.C."/>
            <person name="Higgins J.D."/>
            <person name="Hund T.J."/>
            <person name="Band H."/>
            <person name="Mohler P.J."/>
        </authorList>
    </citation>
    <scope>FUNCTION</scope>
    <scope>INTERACTION WITH CACNA1GG AND CACNA1H</scope>
    <scope>SUBCELLULAR LOCATION</scope>
</reference>
<reference key="16">
    <citation type="journal article" date="2015" name="Nat. Cell Biol.">
        <title>Early steps in primary cilium assembly require EHD1/EHD3-dependent ciliary vesicle formation.</title>
        <authorList>
            <person name="Lu Q."/>
            <person name="Insinna C."/>
            <person name="Ott C."/>
            <person name="Stauffer J."/>
            <person name="Pintado P.A."/>
            <person name="Rahajeng J."/>
            <person name="Baxa U."/>
            <person name="Walia V."/>
            <person name="Cuenca A."/>
            <person name="Hwang Y.S."/>
            <person name="Daar I.O."/>
            <person name="Lopes S."/>
            <person name="Lippincott-Schwartz J."/>
            <person name="Jackson P.K."/>
            <person name="Caplan S."/>
            <person name="Westlake C.J."/>
        </authorList>
    </citation>
    <scope>FUNCTION</scope>
</reference>
<reference key="17">
    <citation type="journal article" date="2015" name="Nat. Cell Biol.">
        <authorList>
            <person name="Lu Q."/>
            <person name="Insinna C."/>
            <person name="Ott C."/>
            <person name="Stauffer J."/>
            <person name="Pintado P.A."/>
            <person name="Rahajeng J."/>
            <person name="Baxa U."/>
            <person name="Walia V."/>
            <person name="Cuenca A."/>
            <person name="Hwang Y.S."/>
            <person name="Daar I.O."/>
            <person name="Lopes S."/>
            <person name="Lippincott-Schwartz J."/>
            <person name="Jackson P.K."/>
            <person name="Caplan S."/>
            <person name="Westlake C.J."/>
        </authorList>
    </citation>
    <scope>ERRATUM OF PUBMED:25686250</scope>
</reference>
<reference key="18">
    <citation type="journal article" date="2016" name="Exp. Cell Res.">
        <title>Phosphatidic acid induces EHD3-containing membrane tubulation and is required for receptor recycling.</title>
        <authorList>
            <person name="Henmi Y."/>
            <person name="Oe N."/>
            <person name="Kono N."/>
            <person name="Taguchi T."/>
            <person name="Takei K."/>
            <person name="Tanabe K."/>
        </authorList>
    </citation>
    <scope>FUNCTION</scope>
    <scope>MUTAGENESIS OF LYS-327</scope>
</reference>
<gene>
    <name evidence="23" type="primary">Ehd3</name>
    <name type="synonym">Ehd2</name>
</gene>
<evidence type="ECO:0000250" key="1">
    <source>
        <dbReference type="UniProtKB" id="Q8BH64"/>
    </source>
</evidence>
<evidence type="ECO:0000250" key="2">
    <source>
        <dbReference type="UniProtKB" id="Q8R491"/>
    </source>
</evidence>
<evidence type="ECO:0000250" key="3">
    <source>
        <dbReference type="UniProtKB" id="Q9NZN3"/>
    </source>
</evidence>
<evidence type="ECO:0000250" key="4">
    <source>
        <dbReference type="UniProtKB" id="Q9WVK4"/>
    </source>
</evidence>
<evidence type="ECO:0000255" key="5"/>
<evidence type="ECO:0000255" key="6">
    <source>
        <dbReference type="PROSITE-ProRule" id="PRU00077"/>
    </source>
</evidence>
<evidence type="ECO:0000255" key="7">
    <source>
        <dbReference type="PROSITE-ProRule" id="PRU00448"/>
    </source>
</evidence>
<evidence type="ECO:0000255" key="8">
    <source>
        <dbReference type="PROSITE-ProRule" id="PRU01055"/>
    </source>
</evidence>
<evidence type="ECO:0000269" key="9">
    <source>
    </source>
</evidence>
<evidence type="ECO:0000269" key="10">
    <source>
    </source>
</evidence>
<evidence type="ECO:0000269" key="11">
    <source>
    </source>
</evidence>
<evidence type="ECO:0000269" key="12">
    <source>
    </source>
</evidence>
<evidence type="ECO:0000269" key="13">
    <source>
    </source>
</evidence>
<evidence type="ECO:0000269" key="14">
    <source>
    </source>
</evidence>
<evidence type="ECO:0000269" key="15">
    <source>
    </source>
</evidence>
<evidence type="ECO:0000269" key="16">
    <source>
    </source>
</evidence>
<evidence type="ECO:0000269" key="17">
    <source>
    </source>
</evidence>
<evidence type="ECO:0000269" key="18">
    <source>
    </source>
</evidence>
<evidence type="ECO:0000269" key="19">
    <source>
    </source>
</evidence>
<evidence type="ECO:0000269" key="20">
    <source>
    </source>
</evidence>
<evidence type="ECO:0000305" key="21"/>
<evidence type="ECO:0000305" key="22">
    <source>
    </source>
</evidence>
<evidence type="ECO:0000312" key="23">
    <source>
        <dbReference type="MGI" id="MGI:1928900"/>
    </source>
</evidence>
<evidence type="ECO:0007744" key="24">
    <source>
    </source>
</evidence>
<sequence length="535" mass="60821">MFSWLGNDDRRKKDPEVFQTVSDGLKKLYKTKLLPLEEYYRFHEFHSPALEDADFDNKPMVLLVGQYSTGKTTFIRYLLEQDFPGMRIGPEPTTDSFIAVMQGDVEGIIPGNALVVDPKKPFRKLNAFGNAFLNRFVCAQLPNAVLESISVIDTPGILSGEKQRISRGYDFAAVLEWFAERVDRIILLFDAHKLDISDEFSEVIKALKNHEDKMRVVLNKADQIETQQLMRVYGALMWSLGKIVNTPEVIRVYIGSFWSHPLLIPDNRKLFEAEEQDLFRDIQSLPRNAALRKLNDLIKRARLAKVHAYIISSLKKEMPSVFGKDTKKKELVNNLAEIYGRIEREHQISPGDFPNLKRMQDQLQAQDFSKFQPLKSKLLEVVDDMLAHDIAQLMVLVRQEETQRPVQMVKGGAFEGTLQGPFGHGYGEGAGEGIDDAEWVVARDKPMYDEIFYTLSPVDGKITGANAKKEMVRSKLPNSVLGKIWKLADIDKDGMLDDEEFALANHLIKVKLEGHELPSELPAHLLPPSKRKVSE</sequence>
<keyword id="KW-0007">Acetylation</keyword>
<keyword id="KW-0067">ATP-binding</keyword>
<keyword id="KW-0106">Calcium</keyword>
<keyword id="KW-1003">Cell membrane</keyword>
<keyword id="KW-0966">Cell projection</keyword>
<keyword id="KW-0969">Cilium</keyword>
<keyword id="KW-0970">Cilium biogenesis/degradation</keyword>
<keyword id="KW-0175">Coiled coil</keyword>
<keyword id="KW-0968">Cytoplasmic vesicle</keyword>
<keyword id="KW-0903">Direct protein sequencing</keyword>
<keyword id="KW-0967">Endosome</keyword>
<keyword id="KW-1017">Isopeptide bond</keyword>
<keyword id="KW-0446">Lipid-binding</keyword>
<keyword id="KW-0472">Membrane</keyword>
<keyword id="KW-0479">Metal-binding</keyword>
<keyword id="KW-0547">Nucleotide-binding</keyword>
<keyword id="KW-0597">Phosphoprotein</keyword>
<keyword id="KW-0653">Protein transport</keyword>
<keyword id="KW-1185">Reference proteome</keyword>
<keyword id="KW-0813">Transport</keyword>
<keyword id="KW-0832">Ubl conjugation</keyword>
<feature type="chain" id="PRO_0000146113" description="EH domain-containing protein 3">
    <location>
        <begin position="1"/>
        <end position="535"/>
    </location>
</feature>
<feature type="domain" description="Dynamin-type G" evidence="8">
    <location>
        <begin position="55"/>
        <end position="286"/>
    </location>
</feature>
<feature type="domain" description="EH" evidence="6">
    <location>
        <begin position="444"/>
        <end position="532"/>
    </location>
</feature>
<feature type="domain" description="EF-hand" evidence="7">
    <location>
        <begin position="476"/>
        <end position="511"/>
    </location>
</feature>
<feature type="region of interest" description="G1 motif" evidence="8">
    <location>
        <begin position="65"/>
        <end position="72"/>
    </location>
</feature>
<feature type="region of interest" description="G2 motif" evidence="8">
    <location>
        <begin position="91"/>
        <end position="92"/>
    </location>
</feature>
<feature type="region of interest" description="G3 motif" evidence="8">
    <location>
        <begin position="153"/>
        <end position="156"/>
    </location>
</feature>
<feature type="region of interest" description="G4 motif" evidence="8">
    <location>
        <begin position="219"/>
        <end position="222"/>
    </location>
</feature>
<feature type="region of interest" description="G5 motif" evidence="8">
    <location>
        <position position="243"/>
    </location>
</feature>
<feature type="coiled-coil region" evidence="5">
    <location>
        <begin position="198"/>
        <end position="227"/>
    </location>
</feature>
<feature type="binding site" evidence="3">
    <location>
        <begin position="65"/>
        <end position="72"/>
    </location>
    <ligand>
        <name>ATP</name>
        <dbReference type="ChEBI" id="CHEBI:30616"/>
    </ligand>
</feature>
<feature type="binding site" evidence="1">
    <location>
        <position position="220"/>
    </location>
    <ligand>
        <name>ATP</name>
        <dbReference type="ChEBI" id="CHEBI:30616"/>
    </ligand>
</feature>
<feature type="binding site" evidence="1">
    <location>
        <position position="258"/>
    </location>
    <ligand>
        <name>ATP</name>
        <dbReference type="ChEBI" id="CHEBI:30616"/>
    </ligand>
</feature>
<feature type="binding site" evidence="7">
    <location>
        <position position="489"/>
    </location>
    <ligand>
        <name>Ca(2+)</name>
        <dbReference type="ChEBI" id="CHEBI:29108"/>
    </ligand>
</feature>
<feature type="binding site" evidence="7">
    <location>
        <position position="491"/>
    </location>
    <ligand>
        <name>Ca(2+)</name>
        <dbReference type="ChEBI" id="CHEBI:29108"/>
    </ligand>
</feature>
<feature type="binding site" evidence="7">
    <location>
        <position position="493"/>
    </location>
    <ligand>
        <name>Ca(2+)</name>
        <dbReference type="ChEBI" id="CHEBI:29108"/>
    </ligand>
</feature>
<feature type="binding site" evidence="7">
    <location>
        <position position="495"/>
    </location>
    <ligand>
        <name>Ca(2+)</name>
        <dbReference type="ChEBI" id="CHEBI:29108"/>
    </ligand>
</feature>
<feature type="binding site" evidence="7">
    <location>
        <position position="500"/>
    </location>
    <ligand>
        <name>Ca(2+)</name>
        <dbReference type="ChEBI" id="CHEBI:29108"/>
    </ligand>
</feature>
<feature type="modified residue" description="N-acetylmethionine" evidence="3">
    <location>
        <position position="1"/>
    </location>
</feature>
<feature type="modified residue" description="Phosphoserine" evidence="2">
    <location>
        <position position="349"/>
    </location>
</feature>
<feature type="modified residue" description="Phosphoserine" evidence="24">
    <location>
        <position position="456"/>
    </location>
</feature>
<feature type="cross-link" description="Glycyl lysine isopeptide (Lys-Gly) (interchain with G-Cter in SUMO)" evidence="3">
    <location>
        <position position="315"/>
    </location>
</feature>
<feature type="cross-link" description="Glycyl lysine isopeptide (Lys-Gly) (interchain with G-Cter in SUMO)" evidence="3">
    <location>
        <position position="511"/>
    </location>
</feature>
<feature type="mutagenesis site" description="Loss of localization to membranes, reduced binding to phosphatidic acid." evidence="20">
    <original>K</original>
    <variation>D</variation>
    <location>
        <position position="327"/>
    </location>
</feature>
<feature type="sequence conflict" description="In Ref. 1; AAF19020." evidence="21" ref="1">
    <original>R</original>
    <variation>K</variation>
    <location>
        <position position="358"/>
    </location>
</feature>
<feature type="sequence conflict" description="In Ref. 1; AAF19020." evidence="21" ref="1">
    <original>S</original>
    <variation>Y</variation>
    <location>
        <position position="529"/>
    </location>
</feature>